<organism>
    <name type="scientific">Burkholderia orbicola (strain AU 1054)</name>
    <dbReference type="NCBI Taxonomy" id="331271"/>
    <lineage>
        <taxon>Bacteria</taxon>
        <taxon>Pseudomonadati</taxon>
        <taxon>Pseudomonadota</taxon>
        <taxon>Betaproteobacteria</taxon>
        <taxon>Burkholderiales</taxon>
        <taxon>Burkholderiaceae</taxon>
        <taxon>Burkholderia</taxon>
        <taxon>Burkholderia cepacia complex</taxon>
        <taxon>Burkholderia orbicola</taxon>
    </lineage>
</organism>
<proteinExistence type="inferred from homology"/>
<reference key="1">
    <citation type="submission" date="2006-05" db="EMBL/GenBank/DDBJ databases">
        <title>Complete sequence of chromosome 1 of Burkholderia cenocepacia AU 1054.</title>
        <authorList>
            <consortium name="US DOE Joint Genome Institute"/>
            <person name="Copeland A."/>
            <person name="Lucas S."/>
            <person name="Lapidus A."/>
            <person name="Barry K."/>
            <person name="Detter J.C."/>
            <person name="Glavina del Rio T."/>
            <person name="Hammon N."/>
            <person name="Israni S."/>
            <person name="Dalin E."/>
            <person name="Tice H."/>
            <person name="Pitluck S."/>
            <person name="Chain P."/>
            <person name="Malfatti S."/>
            <person name="Shin M."/>
            <person name="Vergez L."/>
            <person name="Schmutz J."/>
            <person name="Larimer F."/>
            <person name="Land M."/>
            <person name="Hauser L."/>
            <person name="Kyrpides N."/>
            <person name="Lykidis A."/>
            <person name="LiPuma J.J."/>
            <person name="Konstantinidis K."/>
            <person name="Tiedje J.M."/>
            <person name="Richardson P."/>
        </authorList>
    </citation>
    <scope>NUCLEOTIDE SEQUENCE [LARGE SCALE GENOMIC DNA]</scope>
    <source>
        <strain>AU 1054</strain>
    </source>
</reference>
<comment type="function">
    <text evidence="1">Binds directly to 23S rRNA. The L1 stalk is quite mobile in the ribosome, and is involved in E site tRNA release.</text>
</comment>
<comment type="function">
    <text evidence="1">Protein L1 is also a translational repressor protein, it controls the translation of the L11 operon by binding to its mRNA.</text>
</comment>
<comment type="subunit">
    <text evidence="1">Part of the 50S ribosomal subunit.</text>
</comment>
<comment type="similarity">
    <text evidence="1">Belongs to the universal ribosomal protein uL1 family.</text>
</comment>
<protein>
    <recommendedName>
        <fullName evidence="1">Large ribosomal subunit protein uL1</fullName>
    </recommendedName>
    <alternativeName>
        <fullName evidence="2">50S ribosomal protein L1</fullName>
    </alternativeName>
</protein>
<sequence>MAKISKRRQAFAAKVDRQKLYAIEDALSLVKECASAKFDESIDVAVQLGIDAKKSDQVVRGSVVLPAGTGKSVRVAVFAQGEKAEQARAAGAEIVGMEDLAEQIKAGQMDFDIVIASPDTMRIVGTLGQILGPRGLMPNPKVGTVTPDVATAVKNAKAGQVQFRVDKAGIIHATIGRASFEPTALRSNLSALIEALQKAKPATSKGVYLRKIALSSTMGVGVRVDHATLAAQ</sequence>
<evidence type="ECO:0000255" key="1">
    <source>
        <dbReference type="HAMAP-Rule" id="MF_01318"/>
    </source>
</evidence>
<evidence type="ECO:0000305" key="2"/>
<dbReference type="EMBL" id="CP000378">
    <property type="protein sequence ID" value="ABF77668.1"/>
    <property type="molecule type" value="Genomic_DNA"/>
</dbReference>
<dbReference type="SMR" id="Q1BRT7"/>
<dbReference type="HOGENOM" id="CLU_062853_0_0_4"/>
<dbReference type="GO" id="GO:0022625">
    <property type="term" value="C:cytosolic large ribosomal subunit"/>
    <property type="evidence" value="ECO:0007669"/>
    <property type="project" value="TreeGrafter"/>
</dbReference>
<dbReference type="GO" id="GO:0019843">
    <property type="term" value="F:rRNA binding"/>
    <property type="evidence" value="ECO:0007669"/>
    <property type="project" value="UniProtKB-UniRule"/>
</dbReference>
<dbReference type="GO" id="GO:0003735">
    <property type="term" value="F:structural constituent of ribosome"/>
    <property type="evidence" value="ECO:0007669"/>
    <property type="project" value="InterPro"/>
</dbReference>
<dbReference type="GO" id="GO:0000049">
    <property type="term" value="F:tRNA binding"/>
    <property type="evidence" value="ECO:0007669"/>
    <property type="project" value="UniProtKB-KW"/>
</dbReference>
<dbReference type="GO" id="GO:0006417">
    <property type="term" value="P:regulation of translation"/>
    <property type="evidence" value="ECO:0007669"/>
    <property type="project" value="UniProtKB-KW"/>
</dbReference>
<dbReference type="GO" id="GO:0006412">
    <property type="term" value="P:translation"/>
    <property type="evidence" value="ECO:0007669"/>
    <property type="project" value="UniProtKB-UniRule"/>
</dbReference>
<dbReference type="CDD" id="cd00403">
    <property type="entry name" value="Ribosomal_L1"/>
    <property type="match status" value="1"/>
</dbReference>
<dbReference type="FunFam" id="3.40.50.790:FF:000001">
    <property type="entry name" value="50S ribosomal protein L1"/>
    <property type="match status" value="1"/>
</dbReference>
<dbReference type="Gene3D" id="3.30.190.20">
    <property type="match status" value="1"/>
</dbReference>
<dbReference type="Gene3D" id="3.40.50.790">
    <property type="match status" value="1"/>
</dbReference>
<dbReference type="HAMAP" id="MF_01318_B">
    <property type="entry name" value="Ribosomal_uL1_B"/>
    <property type="match status" value="1"/>
</dbReference>
<dbReference type="InterPro" id="IPR005878">
    <property type="entry name" value="Ribosom_uL1_bac-type"/>
</dbReference>
<dbReference type="InterPro" id="IPR002143">
    <property type="entry name" value="Ribosomal_uL1"/>
</dbReference>
<dbReference type="InterPro" id="IPR023674">
    <property type="entry name" value="Ribosomal_uL1-like"/>
</dbReference>
<dbReference type="InterPro" id="IPR028364">
    <property type="entry name" value="Ribosomal_uL1/biogenesis"/>
</dbReference>
<dbReference type="InterPro" id="IPR016095">
    <property type="entry name" value="Ribosomal_uL1_3-a/b-sand"/>
</dbReference>
<dbReference type="InterPro" id="IPR023673">
    <property type="entry name" value="Ribosomal_uL1_CS"/>
</dbReference>
<dbReference type="NCBIfam" id="TIGR01169">
    <property type="entry name" value="rplA_bact"/>
    <property type="match status" value="1"/>
</dbReference>
<dbReference type="PANTHER" id="PTHR36427">
    <property type="entry name" value="54S RIBOSOMAL PROTEIN L1, MITOCHONDRIAL"/>
    <property type="match status" value="1"/>
</dbReference>
<dbReference type="PANTHER" id="PTHR36427:SF3">
    <property type="entry name" value="LARGE RIBOSOMAL SUBUNIT PROTEIN UL1M"/>
    <property type="match status" value="1"/>
</dbReference>
<dbReference type="Pfam" id="PF00687">
    <property type="entry name" value="Ribosomal_L1"/>
    <property type="match status" value="1"/>
</dbReference>
<dbReference type="PIRSF" id="PIRSF002155">
    <property type="entry name" value="Ribosomal_L1"/>
    <property type="match status" value="1"/>
</dbReference>
<dbReference type="SUPFAM" id="SSF56808">
    <property type="entry name" value="Ribosomal protein L1"/>
    <property type="match status" value="1"/>
</dbReference>
<dbReference type="PROSITE" id="PS01199">
    <property type="entry name" value="RIBOSOMAL_L1"/>
    <property type="match status" value="1"/>
</dbReference>
<feature type="chain" id="PRO_0000307971" description="Large ribosomal subunit protein uL1">
    <location>
        <begin position="1"/>
        <end position="232"/>
    </location>
</feature>
<name>RL1_BURO1</name>
<gene>
    <name evidence="1" type="primary">rplA</name>
    <name type="ordered locus">Bcen_2770</name>
</gene>
<accession>Q1BRT7</accession>
<keyword id="KW-0678">Repressor</keyword>
<keyword id="KW-0687">Ribonucleoprotein</keyword>
<keyword id="KW-0689">Ribosomal protein</keyword>
<keyword id="KW-0694">RNA-binding</keyword>
<keyword id="KW-0699">rRNA-binding</keyword>
<keyword id="KW-0810">Translation regulation</keyword>
<keyword id="KW-0820">tRNA-binding</keyword>